<accession>B0V982</accession>
<comment type="function">
    <text evidence="1">Transport of potassium into the cell. Likely operates as a K(+):H(+) symporter.</text>
</comment>
<comment type="catalytic activity">
    <reaction evidence="1">
        <text>K(+)(in) + H(+)(in) = K(+)(out) + H(+)(out)</text>
        <dbReference type="Rhea" id="RHEA:28490"/>
        <dbReference type="ChEBI" id="CHEBI:15378"/>
        <dbReference type="ChEBI" id="CHEBI:29103"/>
    </reaction>
    <physiologicalReaction direction="right-to-left" evidence="1">
        <dbReference type="Rhea" id="RHEA:28492"/>
    </physiologicalReaction>
</comment>
<comment type="subcellular location">
    <subcellularLocation>
        <location evidence="1">Cell inner membrane</location>
        <topology evidence="1">Multi-pass membrane protein</topology>
    </subcellularLocation>
</comment>
<comment type="similarity">
    <text evidence="1">Belongs to the HAK/KUP transporter (TC 2.A.72) family.</text>
</comment>
<sequence length="625" mass="68874">MQNTAKKATLPATALAALGVVFGDIGTSPLYALKESFHAAHGLGIQPENVLGILSIIFWCLMLIISIKYVAIVMRADNNGEGGIMALLALNLRKAKIADNKKIYMIAIGFIGASLFFGDGIITPAISVLSAVEGLSIATDVFDPFIMPIAIAIIVTLFLVQKHGTAFVGKFFGPITLVWFLSLGILGIHSVIQTPVVLGMFSPHWAIQFIYHHPIMTFFVMGAVVLTVTGGEALYADMGHFGPVPIRLAWFFVVLPCLVLNYAGQGALLLRDPAAIENPFYLLVPQWALYPMIIMATMATVIASQAVISGVFSLARQAIQLGYLPRLSIKHTSESEEGQIYVPFLNWLLLIAIIILILIFKTSSNLASAYGLAVTLTMLCDTILVAVFIYSAWKWSLPKVLLLIIPFFILESVLVGATSLKILSGGWVPLLIGAIAVTILMTWKRGRELTFAKLEHDTLSLDLFVKSIGNSVHWVPGDAVFMTGTPNVVPHAMLHNIKHNKVLHQRNILVTVVIEDVPFVAPEERITTETLAEHFFRIKIFYGFKDEMNVPKALLQAYEQLGLEYDLMHISFFISRDRIVHSVGDGMSPWREKLFISMQRNTSPVSDFYQIPTNRVVELGSQIEI</sequence>
<keyword id="KW-0997">Cell inner membrane</keyword>
<keyword id="KW-1003">Cell membrane</keyword>
<keyword id="KW-0406">Ion transport</keyword>
<keyword id="KW-0472">Membrane</keyword>
<keyword id="KW-0630">Potassium</keyword>
<keyword id="KW-0633">Potassium transport</keyword>
<keyword id="KW-0769">Symport</keyword>
<keyword id="KW-0812">Transmembrane</keyword>
<keyword id="KW-1133">Transmembrane helix</keyword>
<keyword id="KW-0813">Transport</keyword>
<feature type="chain" id="PRO_1000190257" description="Probable potassium transport system protein Kup">
    <location>
        <begin position="1"/>
        <end position="625"/>
    </location>
</feature>
<feature type="transmembrane region" description="Helical" evidence="1">
    <location>
        <begin position="13"/>
        <end position="33"/>
    </location>
</feature>
<feature type="transmembrane region" description="Helical" evidence="1">
    <location>
        <begin position="53"/>
        <end position="73"/>
    </location>
</feature>
<feature type="transmembrane region" description="Helical" evidence="1">
    <location>
        <begin position="103"/>
        <end position="123"/>
    </location>
</feature>
<feature type="transmembrane region" description="Helical" evidence="1">
    <location>
        <begin position="141"/>
        <end position="161"/>
    </location>
</feature>
<feature type="transmembrane region" description="Helical" evidence="1">
    <location>
        <begin position="172"/>
        <end position="192"/>
    </location>
</feature>
<feature type="transmembrane region" description="Helical" evidence="1">
    <location>
        <begin position="206"/>
        <end position="226"/>
    </location>
</feature>
<feature type="transmembrane region" description="Helical" evidence="1">
    <location>
        <begin position="250"/>
        <end position="270"/>
    </location>
</feature>
<feature type="transmembrane region" description="Helical" evidence="1">
    <location>
        <begin position="282"/>
        <end position="302"/>
    </location>
</feature>
<feature type="transmembrane region" description="Helical" evidence="1">
    <location>
        <begin position="340"/>
        <end position="360"/>
    </location>
</feature>
<feature type="transmembrane region" description="Helical" evidence="1">
    <location>
        <begin position="369"/>
        <end position="389"/>
    </location>
</feature>
<feature type="transmembrane region" description="Helical" evidence="1">
    <location>
        <begin position="400"/>
        <end position="420"/>
    </location>
</feature>
<feature type="transmembrane region" description="Helical" evidence="1">
    <location>
        <begin position="422"/>
        <end position="442"/>
    </location>
</feature>
<proteinExistence type="inferred from homology"/>
<name>KUP_ACIBY</name>
<evidence type="ECO:0000255" key="1">
    <source>
        <dbReference type="HAMAP-Rule" id="MF_01522"/>
    </source>
</evidence>
<reference key="1">
    <citation type="journal article" date="2008" name="PLoS ONE">
        <title>Comparative analysis of Acinetobacters: three genomes for three lifestyles.</title>
        <authorList>
            <person name="Vallenet D."/>
            <person name="Nordmann P."/>
            <person name="Barbe V."/>
            <person name="Poirel L."/>
            <person name="Mangenot S."/>
            <person name="Bataille E."/>
            <person name="Dossat C."/>
            <person name="Gas S."/>
            <person name="Kreimeyer A."/>
            <person name="Lenoble P."/>
            <person name="Oztas S."/>
            <person name="Poulain J."/>
            <person name="Segurens B."/>
            <person name="Robert C."/>
            <person name="Abergel C."/>
            <person name="Claverie J.-M."/>
            <person name="Raoult D."/>
            <person name="Medigue C."/>
            <person name="Weissenbach J."/>
            <person name="Cruveiller S."/>
        </authorList>
    </citation>
    <scope>NUCLEOTIDE SEQUENCE [LARGE SCALE GENOMIC DNA]</scope>
    <source>
        <strain>AYE</strain>
    </source>
</reference>
<gene>
    <name evidence="1" type="primary">kup</name>
    <name type="ordered locus">ABAYE0234</name>
</gene>
<organism>
    <name type="scientific">Acinetobacter baumannii (strain AYE)</name>
    <dbReference type="NCBI Taxonomy" id="509173"/>
    <lineage>
        <taxon>Bacteria</taxon>
        <taxon>Pseudomonadati</taxon>
        <taxon>Pseudomonadota</taxon>
        <taxon>Gammaproteobacteria</taxon>
        <taxon>Moraxellales</taxon>
        <taxon>Moraxellaceae</taxon>
        <taxon>Acinetobacter</taxon>
        <taxon>Acinetobacter calcoaceticus/baumannii complex</taxon>
    </lineage>
</organism>
<protein>
    <recommendedName>
        <fullName evidence="1">Probable potassium transport system protein Kup</fullName>
    </recommendedName>
</protein>
<dbReference type="EMBL" id="CU459141">
    <property type="protein sequence ID" value="CAM85217.1"/>
    <property type="molecule type" value="Genomic_DNA"/>
</dbReference>
<dbReference type="RefSeq" id="WP_001181664.1">
    <property type="nucleotide sequence ID" value="NZ_JBDGFB010000011.1"/>
</dbReference>
<dbReference type="EnsemblBacteria" id="CAM85217">
    <property type="protein sequence ID" value="CAM85217"/>
    <property type="gene ID" value="ABAYE0234"/>
</dbReference>
<dbReference type="KEGG" id="aby:ABAYE0234"/>
<dbReference type="HOGENOM" id="CLU_008142_4_2_6"/>
<dbReference type="GO" id="GO:0005886">
    <property type="term" value="C:plasma membrane"/>
    <property type="evidence" value="ECO:0007669"/>
    <property type="project" value="UniProtKB-SubCell"/>
</dbReference>
<dbReference type="GO" id="GO:0015079">
    <property type="term" value="F:potassium ion transmembrane transporter activity"/>
    <property type="evidence" value="ECO:0007669"/>
    <property type="project" value="UniProtKB-UniRule"/>
</dbReference>
<dbReference type="GO" id="GO:0015293">
    <property type="term" value="F:symporter activity"/>
    <property type="evidence" value="ECO:0007669"/>
    <property type="project" value="UniProtKB-UniRule"/>
</dbReference>
<dbReference type="HAMAP" id="MF_01522">
    <property type="entry name" value="Kup"/>
    <property type="match status" value="1"/>
</dbReference>
<dbReference type="InterPro" id="IPR003855">
    <property type="entry name" value="K+_transporter"/>
</dbReference>
<dbReference type="InterPro" id="IPR053952">
    <property type="entry name" value="K_trans_C"/>
</dbReference>
<dbReference type="InterPro" id="IPR053951">
    <property type="entry name" value="K_trans_N"/>
</dbReference>
<dbReference type="InterPro" id="IPR023051">
    <property type="entry name" value="Kup"/>
</dbReference>
<dbReference type="PANTHER" id="PTHR30540:SF79">
    <property type="entry name" value="LOW AFFINITY POTASSIUM TRANSPORT SYSTEM PROTEIN KUP"/>
    <property type="match status" value="1"/>
</dbReference>
<dbReference type="PANTHER" id="PTHR30540">
    <property type="entry name" value="OSMOTIC STRESS POTASSIUM TRANSPORTER"/>
    <property type="match status" value="1"/>
</dbReference>
<dbReference type="Pfam" id="PF02705">
    <property type="entry name" value="K_trans"/>
    <property type="match status" value="1"/>
</dbReference>
<dbReference type="Pfam" id="PF22776">
    <property type="entry name" value="K_trans_C"/>
    <property type="match status" value="1"/>
</dbReference>